<evidence type="ECO:0000255" key="1">
    <source>
        <dbReference type="HAMAP-Rule" id="MF_00112"/>
    </source>
</evidence>
<evidence type="ECO:0000305" key="2"/>
<proteinExistence type="inferred from homology"/>
<accession>A0R904</accession>
<protein>
    <recommendedName>
        <fullName evidence="1">Heptaprenylglyceryl phosphate synthase</fullName>
        <shortName evidence="1">HepGP synthase</shortName>
        <ecNumber evidence="1">2.5.1.n9</ecNumber>
    </recommendedName>
    <alternativeName>
        <fullName evidence="1">Glycerol-1-phosphate heptaprenyltransferase</fullName>
    </alternativeName>
</protein>
<comment type="function">
    <text evidence="1">Prenyltransferase that catalyzes in vivo the transfer of the heptaprenyl moiety of heptaprenyl pyrophosphate (HepPP; 35 carbon atoms) to the C3 hydroxyl of sn-glycerol-1-phosphate (G1P), producing heptaprenylglyceryl phosphate (HepGP). This reaction is an ether-bond-formation step in the biosynthesis of archaea-type G1P-based membrane lipids found in Bacillales.</text>
</comment>
<comment type="catalytic activity">
    <reaction evidence="1">
        <text>sn-glycerol 1-phosphate + all-trans-heptaprenyl diphosphate = 3-heptaprenyl-sn-glycero-1-phosphate + diphosphate</text>
        <dbReference type="Rhea" id="RHEA:33495"/>
        <dbReference type="ChEBI" id="CHEBI:33019"/>
        <dbReference type="ChEBI" id="CHEBI:57685"/>
        <dbReference type="ChEBI" id="CHEBI:58206"/>
        <dbReference type="ChEBI" id="CHEBI:64781"/>
        <dbReference type="EC" id="2.5.1.n9"/>
    </reaction>
</comment>
<comment type="cofactor">
    <cofactor evidence="1">
        <name>Mg(2+)</name>
        <dbReference type="ChEBI" id="CHEBI:18420"/>
    </cofactor>
</comment>
<comment type="pathway">
    <text evidence="1">Membrane lipid metabolism; glycerophospholipid metabolism.</text>
</comment>
<comment type="subunit">
    <text evidence="1">Homodimer.</text>
</comment>
<comment type="similarity">
    <text evidence="1">Belongs to the GGGP/HepGP synthase family. Group I subfamily.</text>
</comment>
<comment type="sequence caution" evidence="2">
    <conflict type="erroneous initiation">
        <sequence resource="EMBL-CDS" id="ABK83697"/>
    </conflict>
</comment>
<gene>
    <name evidence="1" type="primary">pcrB</name>
    <name type="ordered locus">BALH_0296</name>
</gene>
<organism>
    <name type="scientific">Bacillus thuringiensis (strain Al Hakam)</name>
    <dbReference type="NCBI Taxonomy" id="412694"/>
    <lineage>
        <taxon>Bacteria</taxon>
        <taxon>Bacillati</taxon>
        <taxon>Bacillota</taxon>
        <taxon>Bacilli</taxon>
        <taxon>Bacillales</taxon>
        <taxon>Bacillaceae</taxon>
        <taxon>Bacillus</taxon>
        <taxon>Bacillus cereus group</taxon>
    </lineage>
</organism>
<keyword id="KW-0444">Lipid biosynthesis</keyword>
<keyword id="KW-0443">Lipid metabolism</keyword>
<keyword id="KW-0460">Magnesium</keyword>
<keyword id="KW-0479">Metal-binding</keyword>
<keyword id="KW-0594">Phospholipid biosynthesis</keyword>
<keyword id="KW-1208">Phospholipid metabolism</keyword>
<keyword id="KW-0808">Transferase</keyword>
<reference key="1">
    <citation type="journal article" date="2007" name="J. Bacteriol.">
        <title>The complete genome sequence of Bacillus thuringiensis Al Hakam.</title>
        <authorList>
            <person name="Challacombe J.F."/>
            <person name="Altherr M.R."/>
            <person name="Xie G."/>
            <person name="Bhotika S.S."/>
            <person name="Brown N."/>
            <person name="Bruce D."/>
            <person name="Campbell C.S."/>
            <person name="Campbell M.L."/>
            <person name="Chen J."/>
            <person name="Chertkov O."/>
            <person name="Cleland C."/>
            <person name="Dimitrijevic M."/>
            <person name="Doggett N.A."/>
            <person name="Fawcett J.J."/>
            <person name="Glavina T."/>
            <person name="Goodwin L.A."/>
            <person name="Green L.D."/>
            <person name="Han C.S."/>
            <person name="Hill K.K."/>
            <person name="Hitchcock P."/>
            <person name="Jackson P.J."/>
            <person name="Keim P."/>
            <person name="Kewalramani A.R."/>
            <person name="Longmire J."/>
            <person name="Lucas S."/>
            <person name="Malfatti S."/>
            <person name="Martinez D."/>
            <person name="McMurry K."/>
            <person name="Meincke L.J."/>
            <person name="Misra M."/>
            <person name="Moseman B.L."/>
            <person name="Mundt M."/>
            <person name="Munk A.C."/>
            <person name="Okinaka R.T."/>
            <person name="Parson-Quintana B."/>
            <person name="Reilly L.P."/>
            <person name="Richardson P."/>
            <person name="Robinson D.L."/>
            <person name="Saunders E."/>
            <person name="Tapia R."/>
            <person name="Tesmer J.G."/>
            <person name="Thayer N."/>
            <person name="Thompson L.S."/>
            <person name="Tice H."/>
            <person name="Ticknor L.O."/>
            <person name="Wills P.L."/>
            <person name="Gilna P."/>
            <person name="Brettin T.S."/>
        </authorList>
    </citation>
    <scope>NUCLEOTIDE SEQUENCE [LARGE SCALE GENOMIC DNA]</scope>
    <source>
        <strain>Al Hakam</strain>
    </source>
</reference>
<dbReference type="EC" id="2.5.1.n9" evidence="1"/>
<dbReference type="EMBL" id="CP000485">
    <property type="protein sequence ID" value="ABK83697.1"/>
    <property type="status" value="ALT_INIT"/>
    <property type="molecule type" value="Genomic_DNA"/>
</dbReference>
<dbReference type="RefSeq" id="WP_000272088.1">
    <property type="nucleotide sequence ID" value="NC_008600.1"/>
</dbReference>
<dbReference type="SMR" id="A0R904"/>
<dbReference type="KEGG" id="btl:BALH_0296"/>
<dbReference type="HOGENOM" id="CLU_095211_0_0_9"/>
<dbReference type="UniPathway" id="UPA00940"/>
<dbReference type="GO" id="GO:0120536">
    <property type="term" value="F:heptaprenylglyceryl phosphate synthase activity"/>
    <property type="evidence" value="ECO:0007669"/>
    <property type="project" value="RHEA"/>
</dbReference>
<dbReference type="GO" id="GO:0000287">
    <property type="term" value="F:magnesium ion binding"/>
    <property type="evidence" value="ECO:0007669"/>
    <property type="project" value="UniProtKB-UniRule"/>
</dbReference>
<dbReference type="GO" id="GO:0046474">
    <property type="term" value="P:glycerophospholipid biosynthetic process"/>
    <property type="evidence" value="ECO:0007669"/>
    <property type="project" value="UniProtKB-UniRule"/>
</dbReference>
<dbReference type="CDD" id="cd02812">
    <property type="entry name" value="PcrB_like"/>
    <property type="match status" value="1"/>
</dbReference>
<dbReference type="FunFam" id="3.20.20.390:FF:000001">
    <property type="entry name" value="Heptaprenylglyceryl phosphate synthase"/>
    <property type="match status" value="1"/>
</dbReference>
<dbReference type="Gene3D" id="3.20.20.390">
    <property type="entry name" value="FMN-linked oxidoreductases"/>
    <property type="match status" value="1"/>
</dbReference>
<dbReference type="HAMAP" id="MF_00112">
    <property type="entry name" value="GGGP_HepGP_synthase"/>
    <property type="match status" value="1"/>
</dbReference>
<dbReference type="InterPro" id="IPR039074">
    <property type="entry name" value="GGGP/HepGP_synthase_I"/>
</dbReference>
<dbReference type="InterPro" id="IPR038597">
    <property type="entry name" value="GGGP/HepGP_synthase_sf"/>
</dbReference>
<dbReference type="InterPro" id="IPR008205">
    <property type="entry name" value="GGGP_HepGP_synthase"/>
</dbReference>
<dbReference type="NCBIfam" id="TIGR01768">
    <property type="entry name" value="GGGP-family"/>
    <property type="match status" value="1"/>
</dbReference>
<dbReference type="NCBIfam" id="NF003197">
    <property type="entry name" value="PRK04169.1-1"/>
    <property type="match status" value="1"/>
</dbReference>
<dbReference type="NCBIfam" id="NF003199">
    <property type="entry name" value="PRK04169.1-3"/>
    <property type="match status" value="1"/>
</dbReference>
<dbReference type="PANTHER" id="PTHR40029">
    <property type="match status" value="1"/>
</dbReference>
<dbReference type="PANTHER" id="PTHR40029:SF2">
    <property type="entry name" value="HEPTAPRENYLGLYCERYL PHOSPHATE SYNTHASE"/>
    <property type="match status" value="1"/>
</dbReference>
<dbReference type="Pfam" id="PF01884">
    <property type="entry name" value="PcrB"/>
    <property type="match status" value="1"/>
</dbReference>
<dbReference type="SUPFAM" id="SSF51395">
    <property type="entry name" value="FMN-linked oxidoreductases"/>
    <property type="match status" value="1"/>
</dbReference>
<feature type="chain" id="PRO_0000350667" description="Heptaprenylglyceryl phosphate synthase">
    <location>
        <begin position="1"/>
        <end position="229"/>
    </location>
</feature>
<feature type="binding site" evidence="1">
    <location>
        <position position="12"/>
    </location>
    <ligand>
        <name>sn-glycerol 1-phosphate</name>
        <dbReference type="ChEBI" id="CHEBI:57685"/>
    </ligand>
</feature>
<feature type="binding site" evidence="1">
    <location>
        <position position="14"/>
    </location>
    <ligand>
        <name>Mg(2+)</name>
        <dbReference type="ChEBI" id="CHEBI:18420"/>
    </ligand>
</feature>
<feature type="binding site" evidence="1">
    <location>
        <position position="40"/>
    </location>
    <ligand>
        <name>Mg(2+)</name>
        <dbReference type="ChEBI" id="CHEBI:18420"/>
    </ligand>
</feature>
<feature type="binding site" evidence="1">
    <location>
        <begin position="159"/>
        <end position="164"/>
    </location>
    <ligand>
        <name>sn-glycerol 1-phosphate</name>
        <dbReference type="ChEBI" id="CHEBI:57685"/>
    </ligand>
</feature>
<feature type="binding site" evidence="1">
    <location>
        <position position="189"/>
    </location>
    <ligand>
        <name>sn-glycerol 1-phosphate</name>
        <dbReference type="ChEBI" id="CHEBI:57685"/>
    </ligand>
</feature>
<feature type="binding site" evidence="1">
    <location>
        <begin position="209"/>
        <end position="210"/>
    </location>
    <ligand>
        <name>sn-glycerol 1-phosphate</name>
        <dbReference type="ChEBI" id="CHEBI:57685"/>
    </ligand>
</feature>
<name>PCRB_BACAH</name>
<sequence>MYDISGWKHVFKLDPNKELSDEHLEMICESGTDAVIVGGSDGVTIDNVLHMLVSIRRYAVPCVLEVSDVEAITPGFDFYYIPSVLNSRKVEWVTGVHHEALKEFGDIMDWDEIFMEGYCVLNPEAKVAQLTDAKCDVTEDDVIAYARLADKLLRLPIFYLEYSGTYGDVELVKNVKAELKQAKLYYGGGISNAEQAEEMAQHADTVVVGNIIYDDIKAALKTVKAVKGE</sequence>